<reference key="1">
    <citation type="journal article" date="2007" name="Genome Biol.">
        <title>Characterization and modeling of the Haemophilus influenzae core and supragenomes based on the complete genomic sequences of Rd and 12 clinical nontypeable strains.</title>
        <authorList>
            <person name="Hogg J.S."/>
            <person name="Hu F.Z."/>
            <person name="Janto B."/>
            <person name="Boissy R."/>
            <person name="Hayes J."/>
            <person name="Keefe R."/>
            <person name="Post J.C."/>
            <person name="Ehrlich G.D."/>
        </authorList>
    </citation>
    <scope>NUCLEOTIDE SEQUENCE [LARGE SCALE GENOMIC DNA]</scope>
    <source>
        <strain>PittGG</strain>
    </source>
</reference>
<dbReference type="EC" id="3.1.11.6" evidence="1"/>
<dbReference type="EMBL" id="CP000672">
    <property type="protein sequence ID" value="ABQ99309.1"/>
    <property type="molecule type" value="Genomic_DNA"/>
</dbReference>
<dbReference type="SMR" id="A5UEV4"/>
<dbReference type="KEGG" id="hiq:CGSHiGG_01070"/>
<dbReference type="HOGENOM" id="CLU_145918_3_3_6"/>
<dbReference type="Proteomes" id="UP000001990">
    <property type="component" value="Chromosome"/>
</dbReference>
<dbReference type="GO" id="GO:0005829">
    <property type="term" value="C:cytosol"/>
    <property type="evidence" value="ECO:0007669"/>
    <property type="project" value="TreeGrafter"/>
</dbReference>
<dbReference type="GO" id="GO:0009318">
    <property type="term" value="C:exodeoxyribonuclease VII complex"/>
    <property type="evidence" value="ECO:0007669"/>
    <property type="project" value="InterPro"/>
</dbReference>
<dbReference type="GO" id="GO:0008855">
    <property type="term" value="F:exodeoxyribonuclease VII activity"/>
    <property type="evidence" value="ECO:0007669"/>
    <property type="project" value="UniProtKB-UniRule"/>
</dbReference>
<dbReference type="GO" id="GO:0006308">
    <property type="term" value="P:DNA catabolic process"/>
    <property type="evidence" value="ECO:0007669"/>
    <property type="project" value="UniProtKB-UniRule"/>
</dbReference>
<dbReference type="FunFam" id="1.10.287.1040:FF:000001">
    <property type="entry name" value="Exodeoxyribonuclease 7 small subunit"/>
    <property type="match status" value="1"/>
</dbReference>
<dbReference type="Gene3D" id="1.10.287.1040">
    <property type="entry name" value="Exonuclease VII, small subunit"/>
    <property type="match status" value="1"/>
</dbReference>
<dbReference type="HAMAP" id="MF_00337">
    <property type="entry name" value="Exonuc_7_S"/>
    <property type="match status" value="1"/>
</dbReference>
<dbReference type="InterPro" id="IPR003761">
    <property type="entry name" value="Exonuc_VII_S"/>
</dbReference>
<dbReference type="InterPro" id="IPR037004">
    <property type="entry name" value="Exonuc_VII_ssu_sf"/>
</dbReference>
<dbReference type="NCBIfam" id="NF002137">
    <property type="entry name" value="PRK00977.1-1"/>
    <property type="match status" value="1"/>
</dbReference>
<dbReference type="NCBIfam" id="NF002140">
    <property type="entry name" value="PRK00977.1-4"/>
    <property type="match status" value="1"/>
</dbReference>
<dbReference type="NCBIfam" id="TIGR01280">
    <property type="entry name" value="xseB"/>
    <property type="match status" value="1"/>
</dbReference>
<dbReference type="PANTHER" id="PTHR34137">
    <property type="entry name" value="EXODEOXYRIBONUCLEASE 7 SMALL SUBUNIT"/>
    <property type="match status" value="1"/>
</dbReference>
<dbReference type="PANTHER" id="PTHR34137:SF1">
    <property type="entry name" value="EXODEOXYRIBONUCLEASE 7 SMALL SUBUNIT"/>
    <property type="match status" value="1"/>
</dbReference>
<dbReference type="Pfam" id="PF02609">
    <property type="entry name" value="Exonuc_VII_S"/>
    <property type="match status" value="1"/>
</dbReference>
<dbReference type="PIRSF" id="PIRSF006488">
    <property type="entry name" value="Exonuc_VII_S"/>
    <property type="match status" value="1"/>
</dbReference>
<dbReference type="SUPFAM" id="SSF116842">
    <property type="entry name" value="XseB-like"/>
    <property type="match status" value="1"/>
</dbReference>
<accession>A5UEV4</accession>
<keyword id="KW-0963">Cytoplasm</keyword>
<keyword id="KW-0269">Exonuclease</keyword>
<keyword id="KW-0378">Hydrolase</keyword>
<keyword id="KW-0540">Nuclease</keyword>
<gene>
    <name evidence="1" type="primary">xseB</name>
    <name type="ordered locus">CGSHiGG_01070</name>
</gene>
<evidence type="ECO:0000255" key="1">
    <source>
        <dbReference type="HAMAP-Rule" id="MF_00337"/>
    </source>
</evidence>
<protein>
    <recommendedName>
        <fullName evidence="1">Exodeoxyribonuclease 7 small subunit</fullName>
        <ecNumber evidence="1">3.1.11.6</ecNumber>
    </recommendedName>
    <alternativeName>
        <fullName evidence="1">Exodeoxyribonuclease VII small subunit</fullName>
        <shortName evidence="1">Exonuclease VII small subunit</shortName>
    </alternativeName>
</protein>
<sequence>MARKPASSQDFETTLAKLENIVAHLENGDLPLEEALKEFEQGVQLAKLGQERLQQAEQRIQILLQKTEDAPLNDYKGNA</sequence>
<feature type="chain" id="PRO_1000019582" description="Exodeoxyribonuclease 7 small subunit">
    <location>
        <begin position="1"/>
        <end position="79"/>
    </location>
</feature>
<organism>
    <name type="scientific">Haemophilus influenzae (strain PittGG)</name>
    <dbReference type="NCBI Taxonomy" id="374931"/>
    <lineage>
        <taxon>Bacteria</taxon>
        <taxon>Pseudomonadati</taxon>
        <taxon>Pseudomonadota</taxon>
        <taxon>Gammaproteobacteria</taxon>
        <taxon>Pasteurellales</taxon>
        <taxon>Pasteurellaceae</taxon>
        <taxon>Haemophilus</taxon>
    </lineage>
</organism>
<comment type="function">
    <text evidence="1">Bidirectionally degrades single-stranded DNA into large acid-insoluble oligonucleotides, which are then degraded further into small acid-soluble oligonucleotides.</text>
</comment>
<comment type="catalytic activity">
    <reaction evidence="1">
        <text>Exonucleolytic cleavage in either 5'- to 3'- or 3'- to 5'-direction to yield nucleoside 5'-phosphates.</text>
        <dbReference type="EC" id="3.1.11.6"/>
    </reaction>
</comment>
<comment type="subunit">
    <text evidence="1">Heterooligomer composed of large and small subunits.</text>
</comment>
<comment type="subcellular location">
    <subcellularLocation>
        <location evidence="1">Cytoplasm</location>
    </subcellularLocation>
</comment>
<comment type="similarity">
    <text evidence="1">Belongs to the XseB family.</text>
</comment>
<proteinExistence type="inferred from homology"/>
<name>EX7S_HAEIG</name>